<protein>
    <recommendedName>
        <fullName>Homeobox protein HMX3</fullName>
    </recommendedName>
    <alternativeName>
        <fullName>Homeobox protein H6 family member 3</fullName>
    </alternativeName>
    <alternativeName>
        <fullName>Homeobox protein Nkx-5.1</fullName>
    </alternativeName>
</protein>
<keyword id="KW-0217">Developmental protein</keyword>
<keyword id="KW-0221">Differentiation</keyword>
<keyword id="KW-0238">DNA-binding</keyword>
<keyword id="KW-0371">Homeobox</keyword>
<keyword id="KW-0524">Neurogenesis</keyword>
<keyword id="KW-0539">Nucleus</keyword>
<keyword id="KW-1185">Reference proteome</keyword>
<keyword id="KW-0804">Transcription</keyword>
<keyword id="KW-0805">Transcription regulation</keyword>
<evidence type="ECO:0000250" key="1"/>
<evidence type="ECO:0000255" key="2">
    <source>
        <dbReference type="PROSITE-ProRule" id="PRU00108"/>
    </source>
</evidence>
<evidence type="ECO:0000256" key="3">
    <source>
        <dbReference type="SAM" id="MobiDB-lite"/>
    </source>
</evidence>
<evidence type="ECO:0000269" key="4">
    <source>
    </source>
</evidence>
<evidence type="ECO:0000269" key="5">
    <source>
    </source>
</evidence>
<evidence type="ECO:0000305" key="6"/>
<gene>
    <name type="primary">hmx3</name>
    <name type="synonym">nkx-5.1</name>
    <name type="synonym">nkx5-1</name>
</gene>
<proteinExistence type="evidence at transcript level"/>
<dbReference type="EMBL" id="AF288211">
    <property type="protein sequence ID" value="AAG17822.1"/>
    <property type="molecule type" value="mRNA"/>
</dbReference>
<dbReference type="EMBL" id="EU050651">
    <property type="protein sequence ID" value="ABW07818.1"/>
    <property type="molecule type" value="mRNA"/>
</dbReference>
<dbReference type="EMBL" id="BC095015">
    <property type="protein sequence ID" value="AAH95015.1"/>
    <property type="molecule type" value="mRNA"/>
</dbReference>
<dbReference type="SMR" id="Q504H8"/>
<dbReference type="FunCoup" id="Q504H8">
    <property type="interactions" value="62"/>
</dbReference>
<dbReference type="STRING" id="7955.ENSDARP00000095383"/>
<dbReference type="PaxDb" id="7955-ENSDARP00000095383"/>
<dbReference type="AGR" id="ZFIN:ZDB-GENE-001020-1"/>
<dbReference type="ZFIN" id="ZDB-GENE-001020-1">
    <property type="gene designation" value="hmx3a"/>
</dbReference>
<dbReference type="eggNOG" id="KOG0485">
    <property type="taxonomic scope" value="Eukaryota"/>
</dbReference>
<dbReference type="InParanoid" id="Q504H8"/>
<dbReference type="PhylomeDB" id="Q504H8"/>
<dbReference type="PRO" id="PR:Q504H8"/>
<dbReference type="Proteomes" id="UP000000437">
    <property type="component" value="Unplaced"/>
</dbReference>
<dbReference type="GO" id="GO:0005634">
    <property type="term" value="C:nucleus"/>
    <property type="evidence" value="ECO:0000318"/>
    <property type="project" value="GO_Central"/>
</dbReference>
<dbReference type="GO" id="GO:0000981">
    <property type="term" value="F:DNA-binding transcription factor activity, RNA polymerase II-specific"/>
    <property type="evidence" value="ECO:0000318"/>
    <property type="project" value="GO_Central"/>
</dbReference>
<dbReference type="GO" id="GO:0000977">
    <property type="term" value="F:RNA polymerase II transcription regulatory region sequence-specific DNA binding"/>
    <property type="evidence" value="ECO:0000318"/>
    <property type="project" value="GO_Central"/>
</dbReference>
<dbReference type="GO" id="GO:0030154">
    <property type="term" value="P:cell differentiation"/>
    <property type="evidence" value="ECO:0007669"/>
    <property type="project" value="UniProtKB-KW"/>
</dbReference>
<dbReference type="GO" id="GO:0042472">
    <property type="term" value="P:inner ear morphogenesis"/>
    <property type="evidence" value="ECO:0000315"/>
    <property type="project" value="ZFIN"/>
</dbReference>
<dbReference type="GO" id="GO:0048840">
    <property type="term" value="P:otolith development"/>
    <property type="evidence" value="ECO:0000315"/>
    <property type="project" value="ZFIN"/>
</dbReference>
<dbReference type="GO" id="GO:0048916">
    <property type="term" value="P:posterior lateral line development"/>
    <property type="evidence" value="ECO:0000316"/>
    <property type="project" value="ZFIN"/>
</dbReference>
<dbReference type="GO" id="GO:0048920">
    <property type="term" value="P:posterior lateral line neuromast primordium migration"/>
    <property type="evidence" value="ECO:0000315"/>
    <property type="project" value="ZFIN"/>
</dbReference>
<dbReference type="GO" id="GO:0006357">
    <property type="term" value="P:regulation of transcription by RNA polymerase II"/>
    <property type="evidence" value="ECO:0000318"/>
    <property type="project" value="GO_Central"/>
</dbReference>
<dbReference type="GO" id="GO:0021510">
    <property type="term" value="P:spinal cord development"/>
    <property type="evidence" value="ECO:0000315"/>
    <property type="project" value="ZFIN"/>
</dbReference>
<dbReference type="CDD" id="cd00086">
    <property type="entry name" value="homeodomain"/>
    <property type="match status" value="1"/>
</dbReference>
<dbReference type="FunFam" id="1.10.10.60:FF:000053">
    <property type="entry name" value="H6 family homeobox 2"/>
    <property type="match status" value="1"/>
</dbReference>
<dbReference type="Gene3D" id="1.10.10.60">
    <property type="entry name" value="Homeodomain-like"/>
    <property type="match status" value="1"/>
</dbReference>
<dbReference type="InterPro" id="IPR001356">
    <property type="entry name" value="HD"/>
</dbReference>
<dbReference type="InterPro" id="IPR020479">
    <property type="entry name" value="HD_metazoa"/>
</dbReference>
<dbReference type="InterPro" id="IPR051300">
    <property type="entry name" value="HMX_Homeobox_TF"/>
</dbReference>
<dbReference type="InterPro" id="IPR017970">
    <property type="entry name" value="Homeobox_CS"/>
</dbReference>
<dbReference type="InterPro" id="IPR009057">
    <property type="entry name" value="Homeodomain-like_sf"/>
</dbReference>
<dbReference type="PANTHER" id="PTHR46110">
    <property type="entry name" value="HOMEOBOX PROTEIN HMX"/>
    <property type="match status" value="1"/>
</dbReference>
<dbReference type="PANTHER" id="PTHR46110:SF2">
    <property type="entry name" value="HOMEOBOX PROTEIN HMX3"/>
    <property type="match status" value="1"/>
</dbReference>
<dbReference type="Pfam" id="PF00046">
    <property type="entry name" value="Homeodomain"/>
    <property type="match status" value="1"/>
</dbReference>
<dbReference type="PRINTS" id="PR00024">
    <property type="entry name" value="HOMEOBOX"/>
</dbReference>
<dbReference type="SMART" id="SM00389">
    <property type="entry name" value="HOX"/>
    <property type="match status" value="1"/>
</dbReference>
<dbReference type="SUPFAM" id="SSF46689">
    <property type="entry name" value="Homeodomain-like"/>
    <property type="match status" value="1"/>
</dbReference>
<dbReference type="PROSITE" id="PS00027">
    <property type="entry name" value="HOMEOBOX_1"/>
    <property type="match status" value="1"/>
</dbReference>
<dbReference type="PROSITE" id="PS50071">
    <property type="entry name" value="HOMEOBOX_2"/>
    <property type="match status" value="1"/>
</dbReference>
<feature type="chain" id="PRO_0000341384" description="Homeobox protein HMX3">
    <location>
        <begin position="1"/>
        <end position="297"/>
    </location>
</feature>
<feature type="DNA-binding region" description="Homeobox" evidence="2">
    <location>
        <begin position="170"/>
        <end position="229"/>
    </location>
</feature>
<feature type="region of interest" description="Disordered" evidence="3">
    <location>
        <begin position="24"/>
        <end position="43"/>
    </location>
</feature>
<feature type="region of interest" description="Disordered" evidence="3">
    <location>
        <begin position="96"/>
        <end position="172"/>
    </location>
</feature>
<feature type="compositionally biased region" description="Basic and acidic residues" evidence="3">
    <location>
        <begin position="109"/>
        <end position="123"/>
    </location>
</feature>
<feature type="compositionally biased region" description="Basic and acidic residues" evidence="3">
    <location>
        <begin position="145"/>
        <end position="166"/>
    </location>
</feature>
<feature type="sequence conflict" description="In Ref. 2; ABW07818." evidence="6" ref="2">
    <original>I</original>
    <variation>T</variation>
    <location>
        <position position="35"/>
    </location>
</feature>
<feature type="sequence conflict" description="In Ref. 1; AAG17822." evidence="6" ref="1">
    <original>I</original>
    <variation>V</variation>
    <location>
        <position position="137"/>
    </location>
</feature>
<feature type="sequence conflict" description="In Ref. 1; AAG17822 and 2; ABW07818." evidence="6" ref="1 2">
    <original>G</original>
    <variation>S</variation>
    <location>
        <position position="142"/>
    </location>
</feature>
<feature type="sequence conflict" description="In Ref. 2; ABW07818." evidence="6" ref="2">
    <original>G</original>
    <variation>S</variation>
    <location>
        <position position="152"/>
    </location>
</feature>
<sequence length="297" mass="33088">MPETTQDTCASAKDSPFFIKNLLNSDSKPSKPKPILAPTKAGLDGSFSLSQVGEINFPRFELPTQRFALPAYLERASAWWYPYTLSASAHLHRTEAAQKARDSSPTTGTDRDSPELVLKSDPDAKDDEDDNKSGDEIVLEEGDTEDGKKEGGIDDWKKSDDGADKKPCRKKKTRTVFSRSQVFQLESTFDMKRYLSSSERAGLAASLHLTETQVKIWFQNRRNKWKRQLAAELEAANLSHAAAQRIVRVPILYHENSASESTNTAGNVPVSQPLLTFPHPVYYSHPIVTSVPLLRPV</sequence>
<name>HMX3_DANRE</name>
<reference key="1">
    <citation type="journal article" date="2000" name="Mech. Dev.">
        <title>Inner ear and lateral line expression of a zebrafish Nkx5-1 gene and its downregulation in the ears of FGF8 mutant, ace.</title>
        <authorList>
            <person name="Adamska M."/>
            <person name="Leger S."/>
            <person name="Brand M."/>
            <person name="Hadrys T."/>
            <person name="Braun T."/>
            <person name="Bober E."/>
        </authorList>
    </citation>
    <scope>NUCLEOTIDE SEQUENCE [MRNA]</scope>
    <scope>TISSUE SPECIFICITY</scope>
    <scope>INDUCTION</scope>
</reference>
<reference key="2">
    <citation type="submission" date="2007-07" db="EMBL/GenBank/DDBJ databases">
        <title>Conserved homeobox genes Hmx2 and Hmx3 play a pivotal role in zebrafish inner ear and lateral line development.</title>
        <authorList>
            <person name="Feng Y."/>
            <person name="Xu Q."/>
        </authorList>
    </citation>
    <scope>NUCLEOTIDE SEQUENCE [MRNA]</scope>
    <source>
        <strain>AB</strain>
    </source>
</reference>
<reference key="3">
    <citation type="submission" date="2005-05" db="EMBL/GenBank/DDBJ databases">
        <authorList>
            <consortium name="NIH - Zebrafish Gene Collection (ZGC) project"/>
        </authorList>
    </citation>
    <scope>NUCLEOTIDE SEQUENCE [LARGE SCALE MRNA]</scope>
    <source>
        <tissue>Eye</tissue>
    </source>
</reference>
<reference key="4">
    <citation type="journal article" date="2002" name="Development">
        <title>An expanded domain of fgf3 expression in the hindbrain of zebrafish valentino mutants results in mis-patterning of the otic vesicle.</title>
        <authorList>
            <person name="Kwak S.-J."/>
            <person name="Phillips B.T."/>
            <person name="Heck R."/>
            <person name="Riley B.B."/>
        </authorList>
    </citation>
    <scope>INDUCTION</scope>
</reference>
<accession>Q504H8</accession>
<accession>A9Y2A8</accession>
<accession>Q9DFB1</accession>
<organism>
    <name type="scientific">Danio rerio</name>
    <name type="common">Zebrafish</name>
    <name type="synonym">Brachydanio rerio</name>
    <dbReference type="NCBI Taxonomy" id="7955"/>
    <lineage>
        <taxon>Eukaryota</taxon>
        <taxon>Metazoa</taxon>
        <taxon>Chordata</taxon>
        <taxon>Craniata</taxon>
        <taxon>Vertebrata</taxon>
        <taxon>Euteleostomi</taxon>
        <taxon>Actinopterygii</taxon>
        <taxon>Neopterygii</taxon>
        <taxon>Teleostei</taxon>
        <taxon>Ostariophysi</taxon>
        <taxon>Cypriniformes</taxon>
        <taxon>Danionidae</taxon>
        <taxon>Danioninae</taxon>
        <taxon>Danio</taxon>
    </lineage>
</organism>
<comment type="function">
    <text evidence="1">Transcription factor involved in specification of neuronal cell types and which is required for inner ear and hypothalamus development. Binds to the 5'-CAAGTG-3' core sequence (By similarity).</text>
</comment>
<comment type="subcellular location">
    <subcellularLocation>
        <location evidence="2">Nucleus</location>
    </subcellularLocation>
</comment>
<comment type="tissue specificity">
    <text evidence="4">Expressed in the ear placode and vesicle and in cells forming the vestibulo-acoustic ganglion. Also expressed in the lateral line.</text>
</comment>
<comment type="induction">
    <text evidence="4 5">Regulated by fgf3 and fgf8 in otic vesicle.</text>
</comment>
<comment type="similarity">
    <text evidence="6">Belongs to the HMX homeobox family.</text>
</comment>